<accession>Q82XQ1</accession>
<dbReference type="EMBL" id="AL954747">
    <property type="protein sequence ID" value="CAD84114.1"/>
    <property type="molecule type" value="Genomic_DNA"/>
</dbReference>
<dbReference type="RefSeq" id="WP_011110848.1">
    <property type="nucleotide sequence ID" value="NC_004757.1"/>
</dbReference>
<dbReference type="SMR" id="Q82XQ1"/>
<dbReference type="STRING" id="228410.NE0203"/>
<dbReference type="GeneID" id="87103410"/>
<dbReference type="KEGG" id="neu:NE0203"/>
<dbReference type="eggNOG" id="COG0712">
    <property type="taxonomic scope" value="Bacteria"/>
</dbReference>
<dbReference type="HOGENOM" id="CLU_085114_3_0_4"/>
<dbReference type="OrthoDB" id="9816221at2"/>
<dbReference type="PhylomeDB" id="Q82XQ1"/>
<dbReference type="Proteomes" id="UP000001416">
    <property type="component" value="Chromosome"/>
</dbReference>
<dbReference type="GO" id="GO:0005886">
    <property type="term" value="C:plasma membrane"/>
    <property type="evidence" value="ECO:0007669"/>
    <property type="project" value="UniProtKB-SubCell"/>
</dbReference>
<dbReference type="GO" id="GO:0045259">
    <property type="term" value="C:proton-transporting ATP synthase complex"/>
    <property type="evidence" value="ECO:0007669"/>
    <property type="project" value="UniProtKB-KW"/>
</dbReference>
<dbReference type="GO" id="GO:0046933">
    <property type="term" value="F:proton-transporting ATP synthase activity, rotational mechanism"/>
    <property type="evidence" value="ECO:0007669"/>
    <property type="project" value="UniProtKB-UniRule"/>
</dbReference>
<dbReference type="Gene3D" id="1.10.520.20">
    <property type="entry name" value="N-terminal domain of the delta subunit of the F1F0-ATP synthase"/>
    <property type="match status" value="1"/>
</dbReference>
<dbReference type="HAMAP" id="MF_01416">
    <property type="entry name" value="ATP_synth_delta_bact"/>
    <property type="match status" value="1"/>
</dbReference>
<dbReference type="InterPro" id="IPR026015">
    <property type="entry name" value="ATP_synth_OSCP/delta_N_sf"/>
</dbReference>
<dbReference type="InterPro" id="IPR000711">
    <property type="entry name" value="ATPase_OSCP/dsu"/>
</dbReference>
<dbReference type="NCBIfam" id="TIGR01145">
    <property type="entry name" value="ATP_synt_delta"/>
    <property type="match status" value="1"/>
</dbReference>
<dbReference type="NCBIfam" id="NF004402">
    <property type="entry name" value="PRK05758.2-2"/>
    <property type="match status" value="1"/>
</dbReference>
<dbReference type="PANTHER" id="PTHR11910">
    <property type="entry name" value="ATP SYNTHASE DELTA CHAIN"/>
    <property type="match status" value="1"/>
</dbReference>
<dbReference type="Pfam" id="PF00213">
    <property type="entry name" value="OSCP"/>
    <property type="match status" value="1"/>
</dbReference>
<dbReference type="PRINTS" id="PR00125">
    <property type="entry name" value="ATPASEDELTA"/>
</dbReference>
<dbReference type="SUPFAM" id="SSF47928">
    <property type="entry name" value="N-terminal domain of the delta subunit of the F1F0-ATP synthase"/>
    <property type="match status" value="1"/>
</dbReference>
<organism>
    <name type="scientific">Nitrosomonas europaea (strain ATCC 19718 / CIP 103999 / KCTC 2705 / NBRC 14298)</name>
    <dbReference type="NCBI Taxonomy" id="228410"/>
    <lineage>
        <taxon>Bacteria</taxon>
        <taxon>Pseudomonadati</taxon>
        <taxon>Pseudomonadota</taxon>
        <taxon>Betaproteobacteria</taxon>
        <taxon>Nitrosomonadales</taxon>
        <taxon>Nitrosomonadaceae</taxon>
        <taxon>Nitrosomonas</taxon>
    </lineage>
</organism>
<proteinExistence type="inferred from homology"/>
<name>ATPD_NITEU</name>
<comment type="function">
    <text evidence="1">F(1)F(0) ATP synthase produces ATP from ADP in the presence of a proton or sodium gradient. F-type ATPases consist of two structural domains, F(1) containing the extramembraneous catalytic core and F(0) containing the membrane proton channel, linked together by a central stalk and a peripheral stalk. During catalysis, ATP synthesis in the catalytic domain of F(1) is coupled via a rotary mechanism of the central stalk subunits to proton translocation.</text>
</comment>
<comment type="function">
    <text evidence="1">This protein is part of the stalk that links CF(0) to CF(1). It either transmits conformational changes from CF(0) to CF(1) or is implicated in proton conduction.</text>
</comment>
<comment type="subunit">
    <text evidence="1">F-type ATPases have 2 components, F(1) - the catalytic core - and F(0) - the membrane proton channel. F(1) has five subunits: alpha(3), beta(3), gamma(1), delta(1), epsilon(1). F(0) has three main subunits: a(1), b(2) and c(10-14). The alpha and beta chains form an alternating ring which encloses part of the gamma chain. F(1) is attached to F(0) by a central stalk formed by the gamma and epsilon chains, while a peripheral stalk is formed by the delta and b chains.</text>
</comment>
<comment type="subcellular location">
    <subcellularLocation>
        <location evidence="1">Cell inner membrane</location>
        <topology evidence="1">Peripheral membrane protein</topology>
    </subcellularLocation>
</comment>
<comment type="similarity">
    <text evidence="1">Belongs to the ATPase delta chain family.</text>
</comment>
<sequence length="178" mass="19670">MAEAITIARPYAEAVFKLARESGSLFSWSETLDAVNSIVRESQIRELISNPLISSVKLREIIFSVCGKKLNEDGKRLVSLLIDNQRLLVMPQIHELFEQLKAQHESILEAEVVSAFPLDSGQLEKLVSILEAKFQRKVKAEVSVDSELIGGVRIKIGDQVVDSSVHGKLEAMATALKS</sequence>
<keyword id="KW-0066">ATP synthesis</keyword>
<keyword id="KW-0997">Cell inner membrane</keyword>
<keyword id="KW-1003">Cell membrane</keyword>
<keyword id="KW-0139">CF(1)</keyword>
<keyword id="KW-0375">Hydrogen ion transport</keyword>
<keyword id="KW-0406">Ion transport</keyword>
<keyword id="KW-0472">Membrane</keyword>
<keyword id="KW-1185">Reference proteome</keyword>
<keyword id="KW-0813">Transport</keyword>
<evidence type="ECO:0000255" key="1">
    <source>
        <dbReference type="HAMAP-Rule" id="MF_01416"/>
    </source>
</evidence>
<reference key="1">
    <citation type="journal article" date="2003" name="J. Bacteriol.">
        <title>Complete genome sequence of the ammonia-oxidizing bacterium and obligate chemolithoautotroph Nitrosomonas europaea.</title>
        <authorList>
            <person name="Chain P."/>
            <person name="Lamerdin J.E."/>
            <person name="Larimer F.W."/>
            <person name="Regala W."/>
            <person name="Lao V."/>
            <person name="Land M.L."/>
            <person name="Hauser L."/>
            <person name="Hooper A.B."/>
            <person name="Klotz M.G."/>
            <person name="Norton J."/>
            <person name="Sayavedra-Soto L.A."/>
            <person name="Arciero D.M."/>
            <person name="Hommes N.G."/>
            <person name="Whittaker M.M."/>
            <person name="Arp D.J."/>
        </authorList>
    </citation>
    <scope>NUCLEOTIDE SEQUENCE [LARGE SCALE GENOMIC DNA]</scope>
    <source>
        <strain>ATCC 19718 / CIP 103999 / KCTC 2705 / NBRC 14298</strain>
    </source>
</reference>
<protein>
    <recommendedName>
        <fullName evidence="1">ATP synthase subunit delta</fullName>
    </recommendedName>
    <alternativeName>
        <fullName evidence="1">ATP synthase F(1) sector subunit delta</fullName>
    </alternativeName>
    <alternativeName>
        <fullName evidence="1">F-type ATPase subunit delta</fullName>
        <shortName evidence="1">F-ATPase subunit delta</shortName>
    </alternativeName>
</protein>
<gene>
    <name evidence="1" type="primary">atpH</name>
    <name type="ordered locus">NE0203</name>
</gene>
<feature type="chain" id="PRO_0000371039" description="ATP synthase subunit delta">
    <location>
        <begin position="1"/>
        <end position="178"/>
    </location>
</feature>